<accession>B7HLH5</accession>
<feature type="chain" id="PRO_1000196554" description="Ribosome maturation factor RimM">
    <location>
        <begin position="1"/>
        <end position="171"/>
    </location>
</feature>
<feature type="domain" description="PRC barrel" evidence="1">
    <location>
        <begin position="96"/>
        <end position="170"/>
    </location>
</feature>
<keyword id="KW-0143">Chaperone</keyword>
<keyword id="KW-0963">Cytoplasm</keyword>
<keyword id="KW-0690">Ribosome biogenesis</keyword>
<keyword id="KW-0698">rRNA processing</keyword>
<evidence type="ECO:0000255" key="1">
    <source>
        <dbReference type="HAMAP-Rule" id="MF_00014"/>
    </source>
</evidence>
<proteinExistence type="inferred from homology"/>
<dbReference type="EMBL" id="CP001177">
    <property type="protein sequence ID" value="ACJ81656.1"/>
    <property type="molecule type" value="Genomic_DNA"/>
</dbReference>
<dbReference type="SMR" id="B7HLH5"/>
<dbReference type="KEGG" id="bcr:BCAH187_A3890"/>
<dbReference type="HOGENOM" id="CLU_077636_3_1_9"/>
<dbReference type="Proteomes" id="UP000002214">
    <property type="component" value="Chromosome"/>
</dbReference>
<dbReference type="GO" id="GO:0005737">
    <property type="term" value="C:cytoplasm"/>
    <property type="evidence" value="ECO:0007669"/>
    <property type="project" value="UniProtKB-SubCell"/>
</dbReference>
<dbReference type="GO" id="GO:0005840">
    <property type="term" value="C:ribosome"/>
    <property type="evidence" value="ECO:0007669"/>
    <property type="project" value="InterPro"/>
</dbReference>
<dbReference type="GO" id="GO:0043022">
    <property type="term" value="F:ribosome binding"/>
    <property type="evidence" value="ECO:0007669"/>
    <property type="project" value="InterPro"/>
</dbReference>
<dbReference type="GO" id="GO:0042274">
    <property type="term" value="P:ribosomal small subunit biogenesis"/>
    <property type="evidence" value="ECO:0007669"/>
    <property type="project" value="UniProtKB-UniRule"/>
</dbReference>
<dbReference type="GO" id="GO:0006364">
    <property type="term" value="P:rRNA processing"/>
    <property type="evidence" value="ECO:0007669"/>
    <property type="project" value="UniProtKB-UniRule"/>
</dbReference>
<dbReference type="Gene3D" id="2.30.30.240">
    <property type="entry name" value="PRC-barrel domain"/>
    <property type="match status" value="1"/>
</dbReference>
<dbReference type="Gene3D" id="2.40.30.60">
    <property type="entry name" value="RimM"/>
    <property type="match status" value="1"/>
</dbReference>
<dbReference type="HAMAP" id="MF_00014">
    <property type="entry name" value="Ribosome_mat_RimM"/>
    <property type="match status" value="1"/>
</dbReference>
<dbReference type="InterPro" id="IPR027275">
    <property type="entry name" value="PRC-brl_dom"/>
</dbReference>
<dbReference type="InterPro" id="IPR011033">
    <property type="entry name" value="PRC_barrel-like_sf"/>
</dbReference>
<dbReference type="InterPro" id="IPR011961">
    <property type="entry name" value="RimM"/>
</dbReference>
<dbReference type="InterPro" id="IPR002676">
    <property type="entry name" value="RimM_N"/>
</dbReference>
<dbReference type="InterPro" id="IPR036976">
    <property type="entry name" value="RimM_N_sf"/>
</dbReference>
<dbReference type="InterPro" id="IPR009000">
    <property type="entry name" value="Transl_B-barrel_sf"/>
</dbReference>
<dbReference type="NCBIfam" id="TIGR02273">
    <property type="entry name" value="16S_RimM"/>
    <property type="match status" value="1"/>
</dbReference>
<dbReference type="PANTHER" id="PTHR33692">
    <property type="entry name" value="RIBOSOME MATURATION FACTOR RIMM"/>
    <property type="match status" value="1"/>
</dbReference>
<dbReference type="PANTHER" id="PTHR33692:SF1">
    <property type="entry name" value="RIBOSOME MATURATION FACTOR RIMM"/>
    <property type="match status" value="1"/>
</dbReference>
<dbReference type="Pfam" id="PF05239">
    <property type="entry name" value="PRC"/>
    <property type="match status" value="1"/>
</dbReference>
<dbReference type="Pfam" id="PF01782">
    <property type="entry name" value="RimM"/>
    <property type="match status" value="1"/>
</dbReference>
<dbReference type="SUPFAM" id="SSF50346">
    <property type="entry name" value="PRC-barrel domain"/>
    <property type="match status" value="1"/>
</dbReference>
<dbReference type="SUPFAM" id="SSF50447">
    <property type="entry name" value="Translation proteins"/>
    <property type="match status" value="1"/>
</dbReference>
<protein>
    <recommendedName>
        <fullName evidence="1">Ribosome maturation factor RimM</fullName>
    </recommendedName>
</protein>
<organism>
    <name type="scientific">Bacillus cereus (strain AH187)</name>
    <dbReference type="NCBI Taxonomy" id="405534"/>
    <lineage>
        <taxon>Bacteria</taxon>
        <taxon>Bacillati</taxon>
        <taxon>Bacillota</taxon>
        <taxon>Bacilli</taxon>
        <taxon>Bacillales</taxon>
        <taxon>Bacillaceae</taxon>
        <taxon>Bacillus</taxon>
        <taxon>Bacillus cereus group</taxon>
    </lineage>
</organism>
<reference key="1">
    <citation type="submission" date="2008-10" db="EMBL/GenBank/DDBJ databases">
        <title>Genome sequence of Bacillus cereus AH187.</title>
        <authorList>
            <person name="Dodson R.J."/>
            <person name="Durkin A.S."/>
            <person name="Rosovitz M.J."/>
            <person name="Rasko D.A."/>
            <person name="Kolsto A.B."/>
            <person name="Okstad O.A."/>
            <person name="Ravel J."/>
            <person name="Sutton G."/>
        </authorList>
    </citation>
    <scope>NUCLEOTIDE SEQUENCE [LARGE SCALE GENOMIC DNA]</scope>
    <source>
        <strain>AH187</strain>
    </source>
</reference>
<comment type="function">
    <text evidence="1">An accessory protein needed during the final step in the assembly of 30S ribosomal subunit, possibly for assembly of the head region. Essential for efficient processing of 16S rRNA. May be needed both before and after RbfA during the maturation of 16S rRNA. It has affinity for free ribosomal 30S subunits but not for 70S ribosomes.</text>
</comment>
<comment type="subunit">
    <text evidence="1">Binds ribosomal protein uS19.</text>
</comment>
<comment type="subcellular location">
    <subcellularLocation>
        <location evidence="1">Cytoplasm</location>
    </subcellularLocation>
</comment>
<comment type="domain">
    <text evidence="1">The PRC barrel domain binds ribosomal protein uS19.</text>
</comment>
<comment type="similarity">
    <text evidence="1">Belongs to the RimM family.</text>
</comment>
<gene>
    <name evidence="1" type="primary">rimM</name>
    <name type="ordered locus">BCAH187_A3890</name>
</gene>
<name>RIMM_BACC7</name>
<sequence>MTKWFNVGKIVNTHGVKGEIRVVSRTDFPEERYKVGNTLYISNEKGGEPFPVKITSHRQHKTFDLLTFEGYGNVNEVEQFKGSLLKVPEDQLGELAEGEYYYHEIIGCNVVTEEGEALGTIKEVLSPGANDVWVIKRPKGQDLLIPYIDDVVLQVNIENKLVTIHVMEGLL</sequence>